<protein>
    <recommendedName>
        <fullName evidence="1">Probable transcriptional regulatory protein STER_0242</fullName>
    </recommendedName>
</protein>
<proteinExistence type="inferred from homology"/>
<comment type="subcellular location">
    <subcellularLocation>
        <location evidence="1">Cytoplasm</location>
    </subcellularLocation>
</comment>
<comment type="similarity">
    <text evidence="1">Belongs to the TACO1 family. YeeN subfamily.</text>
</comment>
<gene>
    <name type="ordered locus">STER_0242</name>
</gene>
<feature type="chain" id="PRO_1000045380" description="Probable transcriptional regulatory protein STER_0242">
    <location>
        <begin position="1"/>
        <end position="238"/>
    </location>
</feature>
<organism>
    <name type="scientific">Streptococcus thermophilus (strain ATCC BAA-491 / LMD-9)</name>
    <dbReference type="NCBI Taxonomy" id="322159"/>
    <lineage>
        <taxon>Bacteria</taxon>
        <taxon>Bacillati</taxon>
        <taxon>Bacillota</taxon>
        <taxon>Bacilli</taxon>
        <taxon>Lactobacillales</taxon>
        <taxon>Streptococcaceae</taxon>
        <taxon>Streptococcus</taxon>
    </lineage>
</organism>
<reference key="1">
    <citation type="journal article" date="2006" name="Proc. Natl. Acad. Sci. U.S.A.">
        <title>Comparative genomics of the lactic acid bacteria.</title>
        <authorList>
            <person name="Makarova K.S."/>
            <person name="Slesarev A."/>
            <person name="Wolf Y.I."/>
            <person name="Sorokin A."/>
            <person name="Mirkin B."/>
            <person name="Koonin E.V."/>
            <person name="Pavlov A."/>
            <person name="Pavlova N."/>
            <person name="Karamychev V."/>
            <person name="Polouchine N."/>
            <person name="Shakhova V."/>
            <person name="Grigoriev I."/>
            <person name="Lou Y."/>
            <person name="Rohksar D."/>
            <person name="Lucas S."/>
            <person name="Huang K."/>
            <person name="Goodstein D.M."/>
            <person name="Hawkins T."/>
            <person name="Plengvidhya V."/>
            <person name="Welker D."/>
            <person name="Hughes J."/>
            <person name="Goh Y."/>
            <person name="Benson A."/>
            <person name="Baldwin K."/>
            <person name="Lee J.-H."/>
            <person name="Diaz-Muniz I."/>
            <person name="Dosti B."/>
            <person name="Smeianov V."/>
            <person name="Wechter W."/>
            <person name="Barabote R."/>
            <person name="Lorca G."/>
            <person name="Altermann E."/>
            <person name="Barrangou R."/>
            <person name="Ganesan B."/>
            <person name="Xie Y."/>
            <person name="Rawsthorne H."/>
            <person name="Tamir D."/>
            <person name="Parker C."/>
            <person name="Breidt F."/>
            <person name="Broadbent J.R."/>
            <person name="Hutkins R."/>
            <person name="O'Sullivan D."/>
            <person name="Steele J."/>
            <person name="Unlu G."/>
            <person name="Saier M.H. Jr."/>
            <person name="Klaenhammer T."/>
            <person name="Richardson P."/>
            <person name="Kozyavkin S."/>
            <person name="Weimer B.C."/>
            <person name="Mills D.A."/>
        </authorList>
    </citation>
    <scope>NUCLEOTIDE SEQUENCE [LARGE SCALE GENOMIC DNA]</scope>
    <source>
        <strain>ATCC BAA-491 / LMD-9</strain>
    </source>
</reference>
<name>Y242_STRTD</name>
<dbReference type="EMBL" id="CP000419">
    <property type="protein sequence ID" value="ABJ65558.1"/>
    <property type="molecule type" value="Genomic_DNA"/>
</dbReference>
<dbReference type="RefSeq" id="WP_002949309.1">
    <property type="nucleotide sequence ID" value="NZ_CP086001.1"/>
</dbReference>
<dbReference type="SMR" id="Q03ML4"/>
<dbReference type="KEGG" id="ste:STER_0242"/>
<dbReference type="HOGENOM" id="CLU_062974_2_0_9"/>
<dbReference type="GO" id="GO:0005829">
    <property type="term" value="C:cytosol"/>
    <property type="evidence" value="ECO:0007669"/>
    <property type="project" value="TreeGrafter"/>
</dbReference>
<dbReference type="GO" id="GO:0003677">
    <property type="term" value="F:DNA binding"/>
    <property type="evidence" value="ECO:0007669"/>
    <property type="project" value="UniProtKB-UniRule"/>
</dbReference>
<dbReference type="GO" id="GO:0006355">
    <property type="term" value="P:regulation of DNA-templated transcription"/>
    <property type="evidence" value="ECO:0007669"/>
    <property type="project" value="UniProtKB-UniRule"/>
</dbReference>
<dbReference type="FunFam" id="1.10.10.200:FF:000003">
    <property type="entry name" value="Probable transcriptional regulatory protein YeeN"/>
    <property type="match status" value="1"/>
</dbReference>
<dbReference type="Gene3D" id="1.10.10.200">
    <property type="match status" value="1"/>
</dbReference>
<dbReference type="Gene3D" id="3.30.70.980">
    <property type="match status" value="2"/>
</dbReference>
<dbReference type="HAMAP" id="MF_00693">
    <property type="entry name" value="Transcrip_reg_TACO1"/>
    <property type="match status" value="1"/>
</dbReference>
<dbReference type="HAMAP" id="MF_00918">
    <property type="entry name" value="Transcrip_reg_TACO1_YeeN"/>
    <property type="match status" value="1"/>
</dbReference>
<dbReference type="InterPro" id="IPR017856">
    <property type="entry name" value="Integrase-like_N"/>
</dbReference>
<dbReference type="InterPro" id="IPR048300">
    <property type="entry name" value="TACO1_YebC-like_2nd/3rd_dom"/>
</dbReference>
<dbReference type="InterPro" id="IPR049083">
    <property type="entry name" value="TACO1_YebC_N"/>
</dbReference>
<dbReference type="InterPro" id="IPR002876">
    <property type="entry name" value="Transcrip_reg_TACO1-like"/>
</dbReference>
<dbReference type="InterPro" id="IPR026564">
    <property type="entry name" value="Transcrip_reg_TACO1-like_dom3"/>
</dbReference>
<dbReference type="InterPro" id="IPR026562">
    <property type="entry name" value="Transcrip_reg_TACO1_YeeN"/>
</dbReference>
<dbReference type="InterPro" id="IPR029072">
    <property type="entry name" value="YebC-like"/>
</dbReference>
<dbReference type="NCBIfam" id="NF001030">
    <property type="entry name" value="PRK00110.1"/>
    <property type="match status" value="1"/>
</dbReference>
<dbReference type="NCBIfam" id="NF009044">
    <property type="entry name" value="PRK12378.1"/>
    <property type="match status" value="1"/>
</dbReference>
<dbReference type="NCBIfam" id="TIGR01033">
    <property type="entry name" value="YebC/PmpR family DNA-binding transcriptional regulator"/>
    <property type="match status" value="1"/>
</dbReference>
<dbReference type="PANTHER" id="PTHR12532">
    <property type="entry name" value="TRANSLATIONAL ACTIVATOR OF CYTOCHROME C OXIDASE 1"/>
    <property type="match status" value="1"/>
</dbReference>
<dbReference type="PANTHER" id="PTHR12532:SF0">
    <property type="entry name" value="TRANSLATIONAL ACTIVATOR OF CYTOCHROME C OXIDASE 1"/>
    <property type="match status" value="1"/>
</dbReference>
<dbReference type="Pfam" id="PF20772">
    <property type="entry name" value="TACO1_YebC_N"/>
    <property type="match status" value="1"/>
</dbReference>
<dbReference type="Pfam" id="PF01709">
    <property type="entry name" value="Transcrip_reg"/>
    <property type="match status" value="1"/>
</dbReference>
<dbReference type="SUPFAM" id="SSF75625">
    <property type="entry name" value="YebC-like"/>
    <property type="match status" value="1"/>
</dbReference>
<keyword id="KW-0963">Cytoplasm</keyword>
<keyword id="KW-0238">DNA-binding</keyword>
<keyword id="KW-0804">Transcription</keyword>
<keyword id="KW-0805">Transcription regulation</keyword>
<evidence type="ECO:0000255" key="1">
    <source>
        <dbReference type="HAMAP-Rule" id="MF_00918"/>
    </source>
</evidence>
<sequence>MGRKWANIVAKKTAKDGANSKIYAKFGVEIYVAAKQGEPDPESNSALKFVLERAKQAQVPKHVIDKAIDKAKGNTDETFVEGRYEGFGPNGSMIIVDTLTSNVNRTAANVRTAFGKNGGNMGASGSVSYMFDKKGVIVFAGEDADAIFEQLLEADVDVEDVEAEDGTITVYTEPTDLHKALEALRANGQEEFQVTELEMIPQTEVTLEGEDLETFKGLIDALEADDDVQKVYHNVADM</sequence>
<accession>Q03ML4</accession>